<sequence>MNKKYIMAIDQGTTSTRAMIFNHRGEVVSKSQQEFSQIYPKPGWVEHSPDEIWVSILGVMSGALRSKGISPKEIAAIGITNQRETTVIWDKNTDEPVYNAIVWQCRRTTDICQELKNNGLEDKFKEKTGLVLDPYFSGTKIKWILDNVAGARQKAKNGDLLFGTIDSWLIWKLTGGKVHVTDYTNASRTLLYNIHELDWDEELLDILGIPESILPEVKASSTIYGNTVPYHFFGEEVPISGIAGDQQAATFAQGCYEKGMTKITYGTGGFMLMNTGKEAVTSDNGLLTTIAWGLDDGIYYALEGSIFNAGSAIQWLRDELDLIEDAADSEYFASKVEDTGGVYVVPAFTGLGAPYWDPRARGIIVGLTRGTNKNHLIRATIESLIYQSKDVLMAMVEDSGLDLKDIKVDGGAAANNLLLQFLSDMTGSRVERPINTETTAAGAAYLAGLAIDFWTDQEEVLKIRKVDREFNPDMSGEKREQLYRGWKKAINAALSWSKT</sequence>
<name>GLPK_HALOH</name>
<gene>
    <name evidence="1" type="primary">glpK</name>
    <name type="ordered locus">Hore_08090</name>
</gene>
<dbReference type="EC" id="2.7.1.30" evidence="1"/>
<dbReference type="EMBL" id="CP001098">
    <property type="protein sequence ID" value="ACL69566.1"/>
    <property type="molecule type" value="Genomic_DNA"/>
</dbReference>
<dbReference type="RefSeq" id="WP_012635754.1">
    <property type="nucleotide sequence ID" value="NC_011899.1"/>
</dbReference>
<dbReference type="SMR" id="B8CW97"/>
<dbReference type="STRING" id="373903.Hore_08090"/>
<dbReference type="KEGG" id="hor:Hore_08090"/>
<dbReference type="eggNOG" id="COG0554">
    <property type="taxonomic scope" value="Bacteria"/>
</dbReference>
<dbReference type="HOGENOM" id="CLU_009281_2_3_9"/>
<dbReference type="OrthoDB" id="9805576at2"/>
<dbReference type="UniPathway" id="UPA00618">
    <property type="reaction ID" value="UER00672"/>
</dbReference>
<dbReference type="Proteomes" id="UP000000719">
    <property type="component" value="Chromosome"/>
</dbReference>
<dbReference type="GO" id="GO:0005524">
    <property type="term" value="F:ATP binding"/>
    <property type="evidence" value="ECO:0007669"/>
    <property type="project" value="UniProtKB-UniRule"/>
</dbReference>
<dbReference type="GO" id="GO:0004370">
    <property type="term" value="F:glycerol kinase activity"/>
    <property type="evidence" value="ECO:0000250"/>
    <property type="project" value="UniProtKB"/>
</dbReference>
<dbReference type="GO" id="GO:0019563">
    <property type="term" value="P:glycerol catabolic process"/>
    <property type="evidence" value="ECO:0007669"/>
    <property type="project" value="UniProtKB-UniRule"/>
</dbReference>
<dbReference type="GO" id="GO:0006071">
    <property type="term" value="P:glycerol metabolic process"/>
    <property type="evidence" value="ECO:0000250"/>
    <property type="project" value="UniProtKB"/>
</dbReference>
<dbReference type="GO" id="GO:0006072">
    <property type="term" value="P:glycerol-3-phosphate metabolic process"/>
    <property type="evidence" value="ECO:0007669"/>
    <property type="project" value="InterPro"/>
</dbReference>
<dbReference type="CDD" id="cd07786">
    <property type="entry name" value="FGGY_EcGK_like"/>
    <property type="match status" value="1"/>
</dbReference>
<dbReference type="FunFam" id="3.30.420.40:FF:000007">
    <property type="entry name" value="Glycerol kinase"/>
    <property type="match status" value="1"/>
</dbReference>
<dbReference type="FunFam" id="3.30.420.40:FF:000008">
    <property type="entry name" value="Glycerol kinase"/>
    <property type="match status" value="1"/>
</dbReference>
<dbReference type="Gene3D" id="3.30.420.40">
    <property type="match status" value="2"/>
</dbReference>
<dbReference type="HAMAP" id="MF_00186">
    <property type="entry name" value="Glycerol_kin"/>
    <property type="match status" value="1"/>
</dbReference>
<dbReference type="InterPro" id="IPR043129">
    <property type="entry name" value="ATPase_NBD"/>
</dbReference>
<dbReference type="InterPro" id="IPR000577">
    <property type="entry name" value="Carb_kinase_FGGY"/>
</dbReference>
<dbReference type="InterPro" id="IPR018483">
    <property type="entry name" value="Carb_kinase_FGGY_CS"/>
</dbReference>
<dbReference type="InterPro" id="IPR018485">
    <property type="entry name" value="FGGY_C"/>
</dbReference>
<dbReference type="InterPro" id="IPR018484">
    <property type="entry name" value="FGGY_N"/>
</dbReference>
<dbReference type="InterPro" id="IPR005999">
    <property type="entry name" value="Glycerol_kin"/>
</dbReference>
<dbReference type="NCBIfam" id="TIGR01311">
    <property type="entry name" value="glycerol_kin"/>
    <property type="match status" value="1"/>
</dbReference>
<dbReference type="NCBIfam" id="NF000756">
    <property type="entry name" value="PRK00047.1"/>
    <property type="match status" value="1"/>
</dbReference>
<dbReference type="Pfam" id="PF02782">
    <property type="entry name" value="FGGY_C"/>
    <property type="match status" value="1"/>
</dbReference>
<dbReference type="Pfam" id="PF00370">
    <property type="entry name" value="FGGY_N"/>
    <property type="match status" value="1"/>
</dbReference>
<dbReference type="PIRSF" id="PIRSF000538">
    <property type="entry name" value="GlpK"/>
    <property type="match status" value="1"/>
</dbReference>
<dbReference type="SUPFAM" id="SSF53067">
    <property type="entry name" value="Actin-like ATPase domain"/>
    <property type="match status" value="2"/>
</dbReference>
<dbReference type="PROSITE" id="PS00933">
    <property type="entry name" value="FGGY_KINASES_1"/>
    <property type="match status" value="1"/>
</dbReference>
<dbReference type="PROSITE" id="PS00445">
    <property type="entry name" value="FGGY_KINASES_2"/>
    <property type="match status" value="1"/>
</dbReference>
<feature type="chain" id="PRO_1000203956" description="Glycerol kinase">
    <location>
        <begin position="1"/>
        <end position="499"/>
    </location>
</feature>
<feature type="binding site" evidence="1">
    <location>
        <position position="13"/>
    </location>
    <ligand>
        <name>ADP</name>
        <dbReference type="ChEBI" id="CHEBI:456216"/>
    </ligand>
</feature>
<feature type="binding site" evidence="1">
    <location>
        <position position="13"/>
    </location>
    <ligand>
        <name>ATP</name>
        <dbReference type="ChEBI" id="CHEBI:30616"/>
    </ligand>
</feature>
<feature type="binding site" evidence="1">
    <location>
        <position position="13"/>
    </location>
    <ligand>
        <name>sn-glycerol 3-phosphate</name>
        <dbReference type="ChEBI" id="CHEBI:57597"/>
    </ligand>
</feature>
<feature type="binding site" evidence="1">
    <location>
        <position position="14"/>
    </location>
    <ligand>
        <name>ATP</name>
        <dbReference type="ChEBI" id="CHEBI:30616"/>
    </ligand>
</feature>
<feature type="binding site" evidence="1">
    <location>
        <position position="15"/>
    </location>
    <ligand>
        <name>ATP</name>
        <dbReference type="ChEBI" id="CHEBI:30616"/>
    </ligand>
</feature>
<feature type="binding site" evidence="1">
    <location>
        <position position="17"/>
    </location>
    <ligand>
        <name>ADP</name>
        <dbReference type="ChEBI" id="CHEBI:456216"/>
    </ligand>
</feature>
<feature type="binding site" evidence="1">
    <location>
        <position position="83"/>
    </location>
    <ligand>
        <name>glycerol</name>
        <dbReference type="ChEBI" id="CHEBI:17754"/>
    </ligand>
</feature>
<feature type="binding site" evidence="1">
    <location>
        <position position="83"/>
    </location>
    <ligand>
        <name>sn-glycerol 3-phosphate</name>
        <dbReference type="ChEBI" id="CHEBI:57597"/>
    </ligand>
</feature>
<feature type="binding site" evidence="1">
    <location>
        <position position="84"/>
    </location>
    <ligand>
        <name>glycerol</name>
        <dbReference type="ChEBI" id="CHEBI:17754"/>
    </ligand>
</feature>
<feature type="binding site" evidence="1">
    <location>
        <position position="84"/>
    </location>
    <ligand>
        <name>sn-glycerol 3-phosphate</name>
        <dbReference type="ChEBI" id="CHEBI:57597"/>
    </ligand>
</feature>
<feature type="binding site" evidence="1">
    <location>
        <position position="135"/>
    </location>
    <ligand>
        <name>glycerol</name>
        <dbReference type="ChEBI" id="CHEBI:17754"/>
    </ligand>
</feature>
<feature type="binding site" evidence="1">
    <location>
        <position position="135"/>
    </location>
    <ligand>
        <name>sn-glycerol 3-phosphate</name>
        <dbReference type="ChEBI" id="CHEBI:57597"/>
    </ligand>
</feature>
<feature type="binding site" evidence="1">
    <location>
        <position position="245"/>
    </location>
    <ligand>
        <name>glycerol</name>
        <dbReference type="ChEBI" id="CHEBI:17754"/>
    </ligand>
</feature>
<feature type="binding site" evidence="1">
    <location>
        <position position="245"/>
    </location>
    <ligand>
        <name>sn-glycerol 3-phosphate</name>
        <dbReference type="ChEBI" id="CHEBI:57597"/>
    </ligand>
</feature>
<feature type="binding site" evidence="1">
    <location>
        <position position="246"/>
    </location>
    <ligand>
        <name>glycerol</name>
        <dbReference type="ChEBI" id="CHEBI:17754"/>
    </ligand>
</feature>
<feature type="binding site" evidence="1">
    <location>
        <position position="267"/>
    </location>
    <ligand>
        <name>ADP</name>
        <dbReference type="ChEBI" id="CHEBI:456216"/>
    </ligand>
</feature>
<feature type="binding site" evidence="1">
    <location>
        <position position="267"/>
    </location>
    <ligand>
        <name>ATP</name>
        <dbReference type="ChEBI" id="CHEBI:30616"/>
    </ligand>
</feature>
<feature type="binding site" evidence="1">
    <location>
        <position position="310"/>
    </location>
    <ligand>
        <name>ADP</name>
        <dbReference type="ChEBI" id="CHEBI:456216"/>
    </ligand>
</feature>
<feature type="binding site" evidence="1">
    <location>
        <position position="310"/>
    </location>
    <ligand>
        <name>ATP</name>
        <dbReference type="ChEBI" id="CHEBI:30616"/>
    </ligand>
</feature>
<feature type="binding site" evidence="1">
    <location>
        <position position="314"/>
    </location>
    <ligand>
        <name>ATP</name>
        <dbReference type="ChEBI" id="CHEBI:30616"/>
    </ligand>
</feature>
<feature type="binding site" evidence="1">
    <location>
        <position position="411"/>
    </location>
    <ligand>
        <name>ADP</name>
        <dbReference type="ChEBI" id="CHEBI:456216"/>
    </ligand>
</feature>
<feature type="binding site" evidence="1">
    <location>
        <position position="411"/>
    </location>
    <ligand>
        <name>ATP</name>
        <dbReference type="ChEBI" id="CHEBI:30616"/>
    </ligand>
</feature>
<feature type="binding site" evidence="1">
    <location>
        <position position="415"/>
    </location>
    <ligand>
        <name>ADP</name>
        <dbReference type="ChEBI" id="CHEBI:456216"/>
    </ligand>
</feature>
<accession>B8CW97</accession>
<reference key="1">
    <citation type="journal article" date="2009" name="PLoS ONE">
        <title>Genome analysis of the anaerobic thermohalophilic bacterium Halothermothrix orenii.</title>
        <authorList>
            <person name="Mavromatis K."/>
            <person name="Ivanova N."/>
            <person name="Anderson I."/>
            <person name="Lykidis A."/>
            <person name="Hooper S.D."/>
            <person name="Sun H."/>
            <person name="Kunin V."/>
            <person name="Lapidus A."/>
            <person name="Hugenholtz P."/>
            <person name="Patel B."/>
            <person name="Kyrpides N.C."/>
        </authorList>
    </citation>
    <scope>NUCLEOTIDE SEQUENCE [LARGE SCALE GENOMIC DNA]</scope>
    <source>
        <strain>H 168 / OCM 544 / DSM 9562</strain>
    </source>
</reference>
<organism>
    <name type="scientific">Halothermothrix orenii (strain H 168 / OCM 544 / DSM 9562)</name>
    <dbReference type="NCBI Taxonomy" id="373903"/>
    <lineage>
        <taxon>Bacteria</taxon>
        <taxon>Bacillati</taxon>
        <taxon>Bacillota</taxon>
        <taxon>Clostridia</taxon>
        <taxon>Halanaerobiales</taxon>
        <taxon>Halothermotrichaceae</taxon>
        <taxon>Halothermothrix</taxon>
    </lineage>
</organism>
<comment type="function">
    <text evidence="1">Key enzyme in the regulation of glycerol uptake and metabolism. Catalyzes the phosphorylation of glycerol to yield sn-glycerol 3-phosphate.</text>
</comment>
<comment type="catalytic activity">
    <reaction evidence="1">
        <text>glycerol + ATP = sn-glycerol 3-phosphate + ADP + H(+)</text>
        <dbReference type="Rhea" id="RHEA:21644"/>
        <dbReference type="ChEBI" id="CHEBI:15378"/>
        <dbReference type="ChEBI" id="CHEBI:17754"/>
        <dbReference type="ChEBI" id="CHEBI:30616"/>
        <dbReference type="ChEBI" id="CHEBI:57597"/>
        <dbReference type="ChEBI" id="CHEBI:456216"/>
        <dbReference type="EC" id="2.7.1.30"/>
    </reaction>
</comment>
<comment type="activity regulation">
    <text evidence="1">Activated by phosphorylation and inhibited by fructose 1,6-bisphosphate (FBP).</text>
</comment>
<comment type="pathway">
    <text evidence="1">Polyol metabolism; glycerol degradation via glycerol kinase pathway; sn-glycerol 3-phosphate from glycerol: step 1/1.</text>
</comment>
<comment type="subunit">
    <text evidence="1">Homotetramer and homodimer (in equilibrium).</text>
</comment>
<comment type="similarity">
    <text evidence="1">Belongs to the FGGY kinase family.</text>
</comment>
<protein>
    <recommendedName>
        <fullName evidence="1">Glycerol kinase</fullName>
        <ecNumber evidence="1">2.7.1.30</ecNumber>
    </recommendedName>
    <alternativeName>
        <fullName evidence="1">ATP:glycerol 3-phosphotransferase</fullName>
    </alternativeName>
    <alternativeName>
        <fullName evidence="1">Glycerokinase</fullName>
        <shortName evidence="1">GK</shortName>
    </alternativeName>
</protein>
<keyword id="KW-0067">ATP-binding</keyword>
<keyword id="KW-0319">Glycerol metabolism</keyword>
<keyword id="KW-0418">Kinase</keyword>
<keyword id="KW-0547">Nucleotide-binding</keyword>
<keyword id="KW-1185">Reference proteome</keyword>
<keyword id="KW-0808">Transferase</keyword>
<proteinExistence type="inferred from homology"/>
<evidence type="ECO:0000255" key="1">
    <source>
        <dbReference type="HAMAP-Rule" id="MF_00186"/>
    </source>
</evidence>